<organism evidence="8">
    <name type="scientific">Xenopus laevis</name>
    <name type="common">African clawed frog</name>
    <dbReference type="NCBI Taxonomy" id="8355"/>
    <lineage>
        <taxon>Eukaryota</taxon>
        <taxon>Metazoa</taxon>
        <taxon>Chordata</taxon>
        <taxon>Craniata</taxon>
        <taxon>Vertebrata</taxon>
        <taxon>Euteleostomi</taxon>
        <taxon>Amphibia</taxon>
        <taxon>Batrachia</taxon>
        <taxon>Anura</taxon>
        <taxon>Pipoidea</taxon>
        <taxon>Pipidae</taxon>
        <taxon>Xenopodinae</taxon>
        <taxon>Xenopus</taxon>
        <taxon>Xenopus</taxon>
    </lineage>
</organism>
<dbReference type="EMBL" id="BC097759">
    <property type="protein sequence ID" value="AAH97759.1"/>
    <property type="molecule type" value="mRNA"/>
</dbReference>
<dbReference type="RefSeq" id="NP_001089510.1">
    <property type="nucleotide sequence ID" value="NM_001096041.1"/>
</dbReference>
<dbReference type="SMR" id="Q4QR00"/>
<dbReference type="DNASU" id="734562"/>
<dbReference type="GeneID" id="734562"/>
<dbReference type="KEGG" id="xla:734562"/>
<dbReference type="AGR" id="Xenbase:XB-GENE-866565"/>
<dbReference type="CTD" id="734562"/>
<dbReference type="Xenbase" id="XB-GENE-866565">
    <property type="gene designation" value="dnai2.S"/>
</dbReference>
<dbReference type="OrthoDB" id="366230at2759"/>
<dbReference type="Proteomes" id="UP000186698">
    <property type="component" value="Chromosome 9_10S"/>
</dbReference>
<dbReference type="Bgee" id="734562">
    <property type="expression patterns" value="Expressed in testis and 12 other cell types or tissues"/>
</dbReference>
<dbReference type="GO" id="GO:0120293">
    <property type="term" value="C:dynein axonemal particle"/>
    <property type="evidence" value="ECO:0000314"/>
    <property type="project" value="UniProtKB"/>
</dbReference>
<dbReference type="GO" id="GO:0005874">
    <property type="term" value="C:microtubule"/>
    <property type="evidence" value="ECO:0007669"/>
    <property type="project" value="UniProtKB-KW"/>
</dbReference>
<dbReference type="GO" id="GO:0036157">
    <property type="term" value="C:outer dynein arm"/>
    <property type="evidence" value="ECO:0000318"/>
    <property type="project" value="GO_Central"/>
</dbReference>
<dbReference type="GO" id="GO:0045504">
    <property type="term" value="F:dynein heavy chain binding"/>
    <property type="evidence" value="ECO:0000318"/>
    <property type="project" value="GO_Central"/>
</dbReference>
<dbReference type="GO" id="GO:0045503">
    <property type="term" value="F:dynein light chain binding"/>
    <property type="evidence" value="ECO:0000318"/>
    <property type="project" value="GO_Central"/>
</dbReference>
<dbReference type="GO" id="GO:0003341">
    <property type="term" value="P:cilium movement"/>
    <property type="evidence" value="ECO:0000318"/>
    <property type="project" value="GO_Central"/>
</dbReference>
<dbReference type="GO" id="GO:0036158">
    <property type="term" value="P:outer dynein arm assembly"/>
    <property type="evidence" value="ECO:0000318"/>
    <property type="project" value="GO_Central"/>
</dbReference>
<dbReference type="FunFam" id="2.130.10.10:FF:002974">
    <property type="entry name" value="Dynein axonemal intermediate chain 2"/>
    <property type="match status" value="1"/>
</dbReference>
<dbReference type="FunFam" id="2.130.10.10:FF:002989">
    <property type="entry name" value="Dynein axonemal intermediate chain 2"/>
    <property type="match status" value="1"/>
</dbReference>
<dbReference type="Gene3D" id="2.130.10.10">
    <property type="entry name" value="YVTN repeat-like/Quinoprotein amine dehydrogenase"/>
    <property type="match status" value="2"/>
</dbReference>
<dbReference type="InterPro" id="IPR050687">
    <property type="entry name" value="Dynein_IC"/>
</dbReference>
<dbReference type="InterPro" id="IPR015943">
    <property type="entry name" value="WD40/YVTN_repeat-like_dom_sf"/>
</dbReference>
<dbReference type="InterPro" id="IPR036322">
    <property type="entry name" value="WD40_repeat_dom_sf"/>
</dbReference>
<dbReference type="InterPro" id="IPR001680">
    <property type="entry name" value="WD40_rpt"/>
</dbReference>
<dbReference type="PANTHER" id="PTHR12442:SF7">
    <property type="entry name" value="DYNEIN AXONEMAL INTERMEDIATE CHAIN 2"/>
    <property type="match status" value="1"/>
</dbReference>
<dbReference type="PANTHER" id="PTHR12442">
    <property type="entry name" value="DYNEIN INTERMEDIATE CHAIN"/>
    <property type="match status" value="1"/>
</dbReference>
<dbReference type="Pfam" id="PF00400">
    <property type="entry name" value="WD40"/>
    <property type="match status" value="1"/>
</dbReference>
<dbReference type="SMART" id="SM00320">
    <property type="entry name" value="WD40"/>
    <property type="match status" value="5"/>
</dbReference>
<dbReference type="SUPFAM" id="SSF50978">
    <property type="entry name" value="WD40 repeat-like"/>
    <property type="match status" value="1"/>
</dbReference>
<dbReference type="PROSITE" id="PS50082">
    <property type="entry name" value="WD_REPEATS_2"/>
    <property type="match status" value="1"/>
</dbReference>
<dbReference type="PROSITE" id="PS50294">
    <property type="entry name" value="WD_REPEATS_REGION"/>
    <property type="match status" value="1"/>
</dbReference>
<protein>
    <recommendedName>
        <fullName>Dynein axonemal intermediate chain 2</fullName>
    </recommendedName>
    <alternativeName>
        <fullName>Axonemal dynein intermediate chain 2</fullName>
    </alternativeName>
</protein>
<keyword id="KW-0966">Cell projection</keyword>
<keyword id="KW-0969">Cilium</keyword>
<keyword id="KW-0970">Cilium biogenesis/degradation</keyword>
<keyword id="KW-0963">Cytoplasm</keyword>
<keyword id="KW-0206">Cytoskeleton</keyword>
<keyword id="KW-0243">Dynein</keyword>
<keyword id="KW-0493">Microtubule</keyword>
<keyword id="KW-0505">Motor protein</keyword>
<keyword id="KW-1185">Reference proteome</keyword>
<keyword id="KW-0677">Repeat</keyword>
<keyword id="KW-0853">WD repeat</keyword>
<sequence>MEIVYVYTRKRSEFGRQCNFSDRPAELHVDILPDPSQALNFIERNPCDVAIQCSHDMSEHEVNTERYDMEAHGINHVEGGWPKDINPQEMEQTIRFRKKVEKDDHYVTTISQLGSVMEHCIKQNNAINIYEEYFEETEELEGIDETPSANTVNVFRDPNEIKRTATHLSWHPDGNRKLAVAYSCLEFQRAPKDMNFESYIWDIEIPNKPELTLRPASPLVCLEYNPKDSHVLIGGCYNGQIAYWDTRKGGNPVESTVIEYSHRDPVYKVIWLQSKTGTECFSASTDGQILWWDIRKLSEPTEKLILDISKKENIDNALGAVSMEFEPTLPTKFMVGTEQGMIVSCNRKAKTPPEKIVCTYGGHHGPIYSIQRNPFFPKNFLTVGDWTARIWSEDCRESSIMWTKYHTSYLTDACWSPTRPTVFLTTKIDGTLDVWDYMYKQNNPSLSLKVSDEPLYNICMQDNGRFVACGSKMGVTTLMELSKGLYTLQRNERNLASAMFERETKREKILEARHREMRLKERSKAEPGEEVKDEKPAEDMKEIIANAEKDFFENIEAELKRKEQQEIKQSEDEHQEKEVSEEKIVHE</sequence>
<comment type="function">
    <text evidence="6">Part of the dynein complex of multiciliated cell cilia.</text>
</comment>
<comment type="subunit">
    <text evidence="1 2 6">Consists of at least two heavy chains and a number of intermediate and light chains (By similarity). Interacts with DNAAF2 (By similarity). Interacts with DNAAF6/PIH1D3. Interacts with HEATR2; probably involved in outer arm dynein assembly (By similarity). Interacts with C16ORF71/DAAP1 (PubMed:33263282).</text>
</comment>
<comment type="subcellular location">
    <subcellularLocation>
        <location evidence="5 6">Cytoplasm</location>
        <location evidence="5 6">Cytoskeleton</location>
        <location evidence="5 6">Cilium axoneme</location>
    </subcellularLocation>
    <subcellularLocation>
        <location evidence="5 6">Dynein axonemal particle</location>
    </subcellularLocation>
    <text evidence="2">Located in the proximal region of respiratory cilia.</text>
</comment>
<comment type="similarity">
    <text evidence="7">Belongs to the dynein intermediate chain family.</text>
</comment>
<name>DNAI2_XENLA</name>
<evidence type="ECO:0000250" key="1">
    <source>
        <dbReference type="UniProtKB" id="A2AC93"/>
    </source>
</evidence>
<evidence type="ECO:0000250" key="2">
    <source>
        <dbReference type="UniProtKB" id="Q9GZS0"/>
    </source>
</evidence>
<evidence type="ECO:0000255" key="3"/>
<evidence type="ECO:0000256" key="4">
    <source>
        <dbReference type="SAM" id="MobiDB-lite"/>
    </source>
</evidence>
<evidence type="ECO:0000269" key="5">
    <source>
    </source>
</evidence>
<evidence type="ECO:0000269" key="6">
    <source>
    </source>
</evidence>
<evidence type="ECO:0000305" key="7"/>
<evidence type="ECO:0000312" key="8">
    <source>
        <dbReference type="EMBL" id="AAH97759.1"/>
    </source>
</evidence>
<feature type="chain" id="PRO_0000452443" description="Dynein axonemal intermediate chain 2">
    <location>
        <begin position="1"/>
        <end position="587"/>
    </location>
</feature>
<feature type="repeat" description="WD 1" evidence="3">
    <location>
        <begin position="214"/>
        <end position="254"/>
    </location>
</feature>
<feature type="repeat" description="WD 2" evidence="3">
    <location>
        <begin position="261"/>
        <end position="302"/>
    </location>
</feature>
<feature type="repeat" description="WD 3" evidence="3">
    <location>
        <begin position="362"/>
        <end position="401"/>
    </location>
</feature>
<feature type="repeat" description="WD 4" evidence="3">
    <location>
        <begin position="405"/>
        <end position="445"/>
    </location>
</feature>
<feature type="region of interest" description="Disordered" evidence="4">
    <location>
        <begin position="519"/>
        <end position="542"/>
    </location>
</feature>
<feature type="region of interest" description="Disordered" evidence="4">
    <location>
        <begin position="562"/>
        <end position="587"/>
    </location>
</feature>
<proteinExistence type="evidence at protein level"/>
<gene>
    <name type="primary">dnai2</name>
</gene>
<accession>Q4QR00</accession>
<reference evidence="8" key="1">
    <citation type="submission" date="2005-06" db="EMBL/GenBank/DDBJ databases">
        <authorList>
            <consortium name="NIH - Xenopus Gene Collection (XGC) project"/>
        </authorList>
    </citation>
    <scope>NUCLEOTIDE SEQUENCE [LARGE SCALE MRNA]</scope>
    <source>
        <tissue evidence="8">Egg</tissue>
    </source>
</reference>
<reference key="2">
    <citation type="journal article" date="2018" name="Elife">
        <title>A liquid-like organelle at the root of motile ciliopathy.</title>
        <authorList>
            <person name="Huizar R.L."/>
            <person name="Lee C."/>
            <person name="Boulgakov A.A."/>
            <person name="Horani A."/>
            <person name="Tu F."/>
            <person name="Marcotte E.M."/>
            <person name="Brody S.L."/>
            <person name="Wallingford J.B."/>
        </authorList>
    </citation>
    <scope>SUBCELLULAR LOCATION</scope>
</reference>
<reference key="3">
    <citation type="journal article" date="2020" name="Elife">
        <title>Functional partitioning of a liquid-like organelle during assembly of axonemal dyneins.</title>
        <authorList>
            <person name="Lee C."/>
            <person name="Cox R.M."/>
            <person name="Papoulas O."/>
            <person name="Horani A."/>
            <person name="Drew K."/>
            <person name="Devitt C.C."/>
            <person name="Brody S.L."/>
            <person name="Marcotte E.M."/>
            <person name="Wallingford J.B."/>
        </authorList>
    </citation>
    <scope>FUNCTION</scope>
    <scope>SUBCELLULAR LOCATION</scope>
    <scope>INTERACTION WITH C16ORF71</scope>
</reference>